<name>NEP_I07A0</name>
<protein>
    <recommendedName>
        <fullName evidence="1">Nuclear export protein</fullName>
        <shortName evidence="1">NEP</shortName>
    </recommendedName>
    <alternativeName>
        <fullName evidence="1">Non-structural protein 2</fullName>
        <shortName evidence="1">NS2</shortName>
    </alternativeName>
</protein>
<organismHost>
    <name type="scientific">Aves</name>
    <dbReference type="NCBI Taxonomy" id="8782"/>
</organismHost>
<organismHost>
    <name type="scientific">Homo sapiens</name>
    <name type="common">Human</name>
    <dbReference type="NCBI Taxonomy" id="9606"/>
</organismHost>
<organismHost>
    <name type="scientific">Sus scrofa</name>
    <name type="common">Pig</name>
    <dbReference type="NCBI Taxonomy" id="9823"/>
</organismHost>
<dbReference type="EMBL" id="CY026215">
    <property type="protein sequence ID" value="ABV45932.1"/>
    <property type="molecule type" value="Viral_cRNA"/>
</dbReference>
<dbReference type="SMR" id="A8C8J9"/>
<dbReference type="Proteomes" id="UP001395887">
    <property type="component" value="Genome"/>
</dbReference>
<dbReference type="GO" id="GO:0042025">
    <property type="term" value="C:host cell nucleus"/>
    <property type="evidence" value="ECO:0007669"/>
    <property type="project" value="UniProtKB-SubCell"/>
</dbReference>
<dbReference type="GO" id="GO:0044423">
    <property type="term" value="C:virion component"/>
    <property type="evidence" value="ECO:0007669"/>
    <property type="project" value="UniProtKB-UniRule"/>
</dbReference>
<dbReference type="GO" id="GO:0039675">
    <property type="term" value="P:exit of virus from host cell nucleus through nuclear pore"/>
    <property type="evidence" value="ECO:0007669"/>
    <property type="project" value="UniProtKB-UniRule"/>
</dbReference>
<dbReference type="Gene3D" id="1.10.287.230">
    <property type="match status" value="1"/>
</dbReference>
<dbReference type="Gene3D" id="1.10.287.10">
    <property type="entry name" value="S15/NS1, RNA-binding"/>
    <property type="match status" value="1"/>
</dbReference>
<dbReference type="HAMAP" id="MF_04067">
    <property type="entry name" value="INFV_NEP"/>
    <property type="match status" value="1"/>
</dbReference>
<dbReference type="InterPro" id="IPR000968">
    <property type="entry name" value="Flu_NS2"/>
</dbReference>
<dbReference type="Pfam" id="PF00601">
    <property type="entry name" value="Flu_NS2"/>
    <property type="match status" value="1"/>
</dbReference>
<dbReference type="SUPFAM" id="SSF101156">
    <property type="entry name" value="Nonstructural protein ns2, Nep, M1-binding domain"/>
    <property type="match status" value="1"/>
</dbReference>
<gene>
    <name evidence="1" type="primary">NS</name>
</gene>
<reference key="1">
    <citation type="submission" date="2007-09" db="EMBL/GenBank/DDBJ databases">
        <title>The NIAID influenza genome sequencing project.</title>
        <authorList>
            <person name="Spiro D."/>
            <person name="Sengamalay N."/>
            <person name="Boyne A."/>
            <person name="Bera J."/>
            <person name="Zaborsky J."/>
            <person name="Subbu V."/>
            <person name="Sparenborg J."/>
            <person name="Gallagher T."/>
            <person name="Overton L."/>
            <person name="Althoff R."/>
            <person name="Liu X."/>
            <person name="Ghedin E."/>
            <person name="Sitz J."/>
            <person name="Katzel D."/>
            <person name="Neupane R."/>
            <person name="Shumway M."/>
            <person name="Koo H."/>
            <person name="Edelman L."/>
            <person name="Menegus M."/>
            <person name="Mayer C."/>
            <person name="Dale S."/>
            <person name="Bao Y."/>
            <person name="Bolotov P."/>
            <person name="Dernovoy D."/>
            <person name="Kiryutin B."/>
            <person name="Lipman D.J."/>
            <person name="Tatusova T."/>
        </authorList>
    </citation>
    <scope>NUCLEOTIDE SEQUENCE [GENOMIC RNA]</scope>
</reference>
<reference key="2">
    <citation type="submission" date="2007-09" db="EMBL/GenBank/DDBJ databases">
        <authorList>
            <consortium name="The NIAID Influenza Genome Sequencing Consortium"/>
        </authorList>
    </citation>
    <scope>NUCLEOTIDE SEQUENCE [GENOMIC RNA]</scope>
</reference>
<keyword id="KW-0025">Alternative splicing</keyword>
<keyword id="KW-1048">Host nucleus</keyword>
<keyword id="KW-0945">Host-virus interaction</keyword>
<keyword id="KW-0813">Transport</keyword>
<keyword id="KW-0946">Virion</keyword>
<sequence length="121" mass="14285">MDSHTVSSFQDILMRMSKMQLGSSSGDLNGMITQFESLKLYRDSLGEAVMRLGDLHSLQHRNGKWREQLGQKFEEIRWLIEEVRHKLKTTENSFEQITFMQALQLLFEVEQEIRTFSFQLI</sequence>
<accession>A8C8J9</accession>
<evidence type="ECO:0000255" key="1">
    <source>
        <dbReference type="HAMAP-Rule" id="MF_04067"/>
    </source>
</evidence>
<organism>
    <name type="scientific">Influenza A virus (strain A/USA:Texas/UR06-0195/2007 H1N1)</name>
    <dbReference type="NCBI Taxonomy" id="455880"/>
    <lineage>
        <taxon>Viruses</taxon>
        <taxon>Riboviria</taxon>
        <taxon>Orthornavirae</taxon>
        <taxon>Negarnaviricota</taxon>
        <taxon>Polyploviricotina</taxon>
        <taxon>Insthoviricetes</taxon>
        <taxon>Articulavirales</taxon>
        <taxon>Orthomyxoviridae</taxon>
        <taxon>Alphainfluenzavirus</taxon>
        <taxon>Alphainfluenzavirus influenzae</taxon>
        <taxon>Influenza A virus</taxon>
    </lineage>
</organism>
<proteinExistence type="inferred from homology"/>
<feature type="chain" id="PRO_0000372947" description="Nuclear export protein">
    <location>
        <begin position="1"/>
        <end position="121"/>
    </location>
</feature>
<feature type="short sequence motif" description="Nuclear export signal" evidence="1">
    <location>
        <begin position="12"/>
        <end position="21"/>
    </location>
</feature>
<feature type="short sequence motif" description="Nuclear export signal" evidence="1">
    <location>
        <begin position="85"/>
        <end position="94"/>
    </location>
</feature>
<comment type="function">
    <text evidence="1">Mediates the nuclear export of encapsidated genomic RNAs (ribonucleoproteins, RNPs). Acts as an adapter between viral RNPs complexes and the nuclear export machinery of the cell. Possesses no intrinsic RNA-binding activity, but includes a C-terminal M1-binding domain. This domain is believed to allow recognition of RNPs bound to the protein M1. Since protein M1 is not available in large quantities before late stages of infection, such an indirect recognition mechanism probably ensures that genomic RNPs are not exported from the host nucleus until sufficient quantities of viral mRNA and progeny genomic RNA have been synthesized. Furthermore, the RNPs enter the host cytoplasm only when associated with the M1 protein that is necessary to guide them to the plasma membrane. May down-regulate viral RNA synthesis when overproduced.</text>
</comment>
<comment type="subunit">
    <text evidence="1">Interacts with protein M1. May interact with host nucleoporin RAB/HRB and exportin XPO1/CRM1.</text>
</comment>
<comment type="subcellular location">
    <subcellularLocation>
        <location evidence="1">Virion</location>
    </subcellularLocation>
    <subcellularLocation>
        <location evidence="1">Host nucleus</location>
    </subcellularLocation>
</comment>
<comment type="alternative products">
    <event type="alternative splicing"/>
    <isoform>
        <id>A8C8J9-1</id>
        <name>NEP</name>
        <name>NS2</name>
        <sequence type="displayed"/>
    </isoform>
    <isoform>
        <id>A8C8K0-1</id>
        <name>NS1</name>
        <sequence type="external"/>
    </isoform>
</comment>
<comment type="miscellaneous">
    <text>Average number present in a viral particle is estimated to be 130-200 molecules.</text>
</comment>
<comment type="similarity">
    <text evidence="1">Belongs to the influenza viruses NEP family.</text>
</comment>